<comment type="function">
    <text evidence="1">Binds to the muscarinic acetylcholine receptor (CHRM).</text>
</comment>
<comment type="subunit">
    <text evidence="1">Monomer.</text>
</comment>
<comment type="subcellular location">
    <subcellularLocation>
        <location evidence="1">Secreted</location>
    </subcellularLocation>
</comment>
<comment type="tissue specificity">
    <text evidence="3">Expressed by the venom gland.</text>
</comment>
<comment type="miscellaneous">
    <text evidence="3">Is classified as a P-type cytotoxin, since a proline residue stands at position 54 (Pro-31 in standard classification).</text>
</comment>
<comment type="similarity">
    <text evidence="3">Belongs to the three-finger toxin family. Short-chain subfamily. Aminergic toxin sub-subfamily.</text>
</comment>
<evidence type="ECO:0000250" key="1"/>
<evidence type="ECO:0000250" key="2">
    <source>
        <dbReference type="UniProtKB" id="P60301"/>
    </source>
</evidence>
<evidence type="ECO:0000305" key="3"/>
<proteinExistence type="inferred from homology"/>
<name>3SIM6_OPHHA</name>
<organism>
    <name type="scientific">Ophiophagus hannah</name>
    <name type="common">King cobra</name>
    <name type="synonym">Naja hannah</name>
    <dbReference type="NCBI Taxonomy" id="8665"/>
    <lineage>
        <taxon>Eukaryota</taxon>
        <taxon>Metazoa</taxon>
        <taxon>Chordata</taxon>
        <taxon>Craniata</taxon>
        <taxon>Vertebrata</taxon>
        <taxon>Euteleostomi</taxon>
        <taxon>Lepidosauria</taxon>
        <taxon>Squamata</taxon>
        <taxon>Bifurcata</taxon>
        <taxon>Unidentata</taxon>
        <taxon>Episquamata</taxon>
        <taxon>Toxicofera</taxon>
        <taxon>Serpentes</taxon>
        <taxon>Colubroidea</taxon>
        <taxon>Elapidae</taxon>
        <taxon>Elapinae</taxon>
        <taxon>Ophiophagus</taxon>
    </lineage>
</organism>
<keyword id="KW-1015">Disulfide bond</keyword>
<keyword id="KW-1214">G-protein coupled acetylcholine receptor impairing toxin</keyword>
<keyword id="KW-1213">G-protein coupled receptor impairing toxin</keyword>
<keyword id="KW-0528">Neurotoxin</keyword>
<keyword id="KW-0629">Postsynaptic neurotoxin</keyword>
<keyword id="KW-0964">Secreted</keyword>
<keyword id="KW-0732">Signal</keyword>
<keyword id="KW-0800">Toxin</keyword>
<dbReference type="EMBL" id="DQ273584">
    <property type="protein sequence ID" value="ABB83638.1"/>
    <property type="molecule type" value="mRNA"/>
</dbReference>
<dbReference type="SMR" id="Q2VBN1"/>
<dbReference type="TopDownProteomics" id="Q2VBN1"/>
<dbReference type="GO" id="GO:0005576">
    <property type="term" value="C:extracellular region"/>
    <property type="evidence" value="ECO:0007669"/>
    <property type="project" value="UniProtKB-SubCell"/>
</dbReference>
<dbReference type="GO" id="GO:0090729">
    <property type="term" value="F:toxin activity"/>
    <property type="evidence" value="ECO:0007669"/>
    <property type="project" value="UniProtKB-KW"/>
</dbReference>
<dbReference type="CDD" id="cd00206">
    <property type="entry name" value="TFP_snake_toxin"/>
    <property type="match status" value="1"/>
</dbReference>
<dbReference type="FunFam" id="2.10.60.10:FF:000024">
    <property type="entry name" value="Cytotoxin 1"/>
    <property type="match status" value="1"/>
</dbReference>
<dbReference type="Gene3D" id="2.10.60.10">
    <property type="entry name" value="CD59"/>
    <property type="match status" value="1"/>
</dbReference>
<dbReference type="InterPro" id="IPR003571">
    <property type="entry name" value="Snake_3FTx"/>
</dbReference>
<dbReference type="InterPro" id="IPR045860">
    <property type="entry name" value="Snake_toxin-like_sf"/>
</dbReference>
<dbReference type="InterPro" id="IPR018354">
    <property type="entry name" value="Snake_toxin_con_site"/>
</dbReference>
<dbReference type="InterPro" id="IPR054131">
    <property type="entry name" value="Toxin_cobra-type"/>
</dbReference>
<dbReference type="Pfam" id="PF21947">
    <property type="entry name" value="Toxin_cobra-type"/>
    <property type="match status" value="1"/>
</dbReference>
<dbReference type="SUPFAM" id="SSF57302">
    <property type="entry name" value="Snake toxin-like"/>
    <property type="match status" value="1"/>
</dbReference>
<dbReference type="PROSITE" id="PS00272">
    <property type="entry name" value="SNAKE_TOXIN"/>
    <property type="match status" value="1"/>
</dbReference>
<accession>Q2VBN1</accession>
<feature type="signal peptide" evidence="1">
    <location>
        <begin position="1"/>
        <end position="21"/>
    </location>
</feature>
<feature type="chain" id="PRO_5000006494" description="Muscarinic toxin MTX6">
    <location>
        <begin position="22"/>
        <end position="86"/>
    </location>
</feature>
<feature type="disulfide bond" evidence="2">
    <location>
        <begin position="24"/>
        <end position="45"/>
    </location>
</feature>
<feature type="disulfide bond" evidence="2">
    <location>
        <begin position="38"/>
        <end position="63"/>
    </location>
</feature>
<feature type="disulfide bond" evidence="2">
    <location>
        <begin position="67"/>
        <end position="78"/>
    </location>
</feature>
<feature type="disulfide bond" evidence="2">
    <location>
        <begin position="79"/>
        <end position="84"/>
    </location>
</feature>
<sequence>MKTLLLTLVVVTILCLDLGYTLTCLTHESLFFETTETCSDGQNLCYAKWFAVFPGARRPDGGCAATCPDKVPLEIVNCCTTDKCNL</sequence>
<reference key="1">
    <citation type="journal article" date="2006" name="Biochem. J.">
        <title>Novel genes encoding six kinds of three-finger toxins in Ophiophagus hannah (king cobra) and function characterization of two recombinant long-chain neurotoxins.</title>
        <authorList>
            <person name="Li J."/>
            <person name="Zhang H."/>
            <person name="Liu J."/>
            <person name="Xu K."/>
        </authorList>
    </citation>
    <scope>NUCLEOTIDE SEQUENCE [MRNA]</scope>
    <source>
        <tissue>Venom gland</tissue>
    </source>
</reference>
<protein>
    <recommendedName>
        <fullName>Muscarinic toxin MTX6</fullName>
    </recommendedName>
</protein>